<proteinExistence type="inferred from homology"/>
<gene>
    <name evidence="1" type="primary">coaX</name>
    <name type="ordered locus">PA14_08630</name>
</gene>
<evidence type="ECO:0000255" key="1">
    <source>
        <dbReference type="HAMAP-Rule" id="MF_01274"/>
    </source>
</evidence>
<feature type="chain" id="PRO_1000054403" description="Type III pantothenate kinase">
    <location>
        <begin position="1"/>
        <end position="248"/>
    </location>
</feature>
<feature type="active site" description="Proton acceptor" evidence="1">
    <location>
        <position position="101"/>
    </location>
</feature>
<feature type="binding site" evidence="1">
    <location>
        <begin position="6"/>
        <end position="13"/>
    </location>
    <ligand>
        <name>ATP</name>
        <dbReference type="ChEBI" id="CHEBI:30616"/>
    </ligand>
</feature>
<feature type="binding site" evidence="1">
    <location>
        <position position="92"/>
    </location>
    <ligand>
        <name>substrate</name>
    </ligand>
</feature>
<feature type="binding site" evidence="1">
    <location>
        <begin position="99"/>
        <end position="102"/>
    </location>
    <ligand>
        <name>substrate</name>
    </ligand>
</feature>
<feature type="binding site" evidence="1">
    <location>
        <position position="121"/>
    </location>
    <ligand>
        <name>K(+)</name>
        <dbReference type="ChEBI" id="CHEBI:29103"/>
    </ligand>
</feature>
<feature type="binding site" evidence="1">
    <location>
        <position position="124"/>
    </location>
    <ligand>
        <name>ATP</name>
        <dbReference type="ChEBI" id="CHEBI:30616"/>
    </ligand>
</feature>
<feature type="binding site" evidence="1">
    <location>
        <position position="180"/>
    </location>
    <ligand>
        <name>substrate</name>
    </ligand>
</feature>
<reference key="1">
    <citation type="journal article" date="2006" name="Genome Biol.">
        <title>Genomic analysis reveals that Pseudomonas aeruginosa virulence is combinatorial.</title>
        <authorList>
            <person name="Lee D.G."/>
            <person name="Urbach J.M."/>
            <person name="Wu G."/>
            <person name="Liberati N.T."/>
            <person name="Feinbaum R.L."/>
            <person name="Miyata S."/>
            <person name="Diggins L.T."/>
            <person name="He J."/>
            <person name="Saucier M."/>
            <person name="Deziel E."/>
            <person name="Friedman L."/>
            <person name="Li L."/>
            <person name="Grills G."/>
            <person name="Montgomery K."/>
            <person name="Kucherlapati R."/>
            <person name="Rahme L.G."/>
            <person name="Ausubel F.M."/>
        </authorList>
    </citation>
    <scope>NUCLEOTIDE SEQUENCE [LARGE SCALE GENOMIC DNA]</scope>
    <source>
        <strain>UCBPP-PA14</strain>
    </source>
</reference>
<organism>
    <name type="scientific">Pseudomonas aeruginosa (strain UCBPP-PA14)</name>
    <dbReference type="NCBI Taxonomy" id="208963"/>
    <lineage>
        <taxon>Bacteria</taxon>
        <taxon>Pseudomonadati</taxon>
        <taxon>Pseudomonadota</taxon>
        <taxon>Gammaproteobacteria</taxon>
        <taxon>Pseudomonadales</taxon>
        <taxon>Pseudomonadaceae</taxon>
        <taxon>Pseudomonas</taxon>
    </lineage>
</organism>
<accession>Q02T96</accession>
<dbReference type="EC" id="2.7.1.33" evidence="1"/>
<dbReference type="EMBL" id="CP000438">
    <property type="protein sequence ID" value="ABJ13549.1"/>
    <property type="molecule type" value="Genomic_DNA"/>
</dbReference>
<dbReference type="RefSeq" id="WP_003093768.1">
    <property type="nucleotide sequence ID" value="NZ_CP034244.1"/>
</dbReference>
<dbReference type="SMR" id="Q02T96"/>
<dbReference type="KEGG" id="pau:PA14_08630"/>
<dbReference type="PseudoCAP" id="PA14_08630"/>
<dbReference type="HOGENOM" id="CLU_066627_0_1_6"/>
<dbReference type="BioCyc" id="PAER208963:G1G74-716-MONOMER"/>
<dbReference type="UniPathway" id="UPA00241">
    <property type="reaction ID" value="UER00352"/>
</dbReference>
<dbReference type="Proteomes" id="UP000000653">
    <property type="component" value="Chromosome"/>
</dbReference>
<dbReference type="GO" id="GO:0005737">
    <property type="term" value="C:cytoplasm"/>
    <property type="evidence" value="ECO:0007669"/>
    <property type="project" value="UniProtKB-SubCell"/>
</dbReference>
<dbReference type="GO" id="GO:0005524">
    <property type="term" value="F:ATP binding"/>
    <property type="evidence" value="ECO:0007669"/>
    <property type="project" value="UniProtKB-UniRule"/>
</dbReference>
<dbReference type="GO" id="GO:0046872">
    <property type="term" value="F:metal ion binding"/>
    <property type="evidence" value="ECO:0007669"/>
    <property type="project" value="UniProtKB-KW"/>
</dbReference>
<dbReference type="GO" id="GO:0004594">
    <property type="term" value="F:pantothenate kinase activity"/>
    <property type="evidence" value="ECO:0007669"/>
    <property type="project" value="UniProtKB-UniRule"/>
</dbReference>
<dbReference type="GO" id="GO:0015937">
    <property type="term" value="P:coenzyme A biosynthetic process"/>
    <property type="evidence" value="ECO:0007669"/>
    <property type="project" value="UniProtKB-UniRule"/>
</dbReference>
<dbReference type="CDD" id="cd24015">
    <property type="entry name" value="ASKHA_NBD_PanK-III"/>
    <property type="match status" value="1"/>
</dbReference>
<dbReference type="Gene3D" id="3.30.420.40">
    <property type="match status" value="2"/>
</dbReference>
<dbReference type="HAMAP" id="MF_01274">
    <property type="entry name" value="Pantothen_kinase_3"/>
    <property type="match status" value="1"/>
</dbReference>
<dbReference type="InterPro" id="IPR043129">
    <property type="entry name" value="ATPase_NBD"/>
</dbReference>
<dbReference type="InterPro" id="IPR004619">
    <property type="entry name" value="Type_III_PanK"/>
</dbReference>
<dbReference type="NCBIfam" id="TIGR00671">
    <property type="entry name" value="baf"/>
    <property type="match status" value="1"/>
</dbReference>
<dbReference type="NCBIfam" id="NF009857">
    <property type="entry name" value="PRK13322.1-2"/>
    <property type="match status" value="1"/>
</dbReference>
<dbReference type="NCBIfam" id="NF009859">
    <property type="entry name" value="PRK13322.1-4"/>
    <property type="match status" value="1"/>
</dbReference>
<dbReference type="PANTHER" id="PTHR34265">
    <property type="entry name" value="TYPE III PANTOTHENATE KINASE"/>
    <property type="match status" value="1"/>
</dbReference>
<dbReference type="PANTHER" id="PTHR34265:SF1">
    <property type="entry name" value="TYPE III PANTOTHENATE KINASE"/>
    <property type="match status" value="1"/>
</dbReference>
<dbReference type="Pfam" id="PF03309">
    <property type="entry name" value="Pan_kinase"/>
    <property type="match status" value="1"/>
</dbReference>
<dbReference type="SUPFAM" id="SSF53067">
    <property type="entry name" value="Actin-like ATPase domain"/>
    <property type="match status" value="2"/>
</dbReference>
<name>COAX_PSEAB</name>
<sequence>MILELDCGNSLIKWRVIEGAARSVAGGLAESDDALVEQLTSQQALPVRACRLVSVRSEQETSQLVARLEQLFPVSALVASSGKQLAGVRNGYLDYQRLGLDRWLALVAAHHLAKKACLVIDLGTAVTSDLVAADGVHLGGYICPGMTLMRSQLRTHTRRIRYDDAEARRALASLQPGQATAEAVERGCLLMLRGFVREQYAMACELLGPDCEIFLTGGDAELVRDELAGARIMPDLVFVGLALACPIE</sequence>
<keyword id="KW-0067">ATP-binding</keyword>
<keyword id="KW-0173">Coenzyme A biosynthesis</keyword>
<keyword id="KW-0963">Cytoplasm</keyword>
<keyword id="KW-0418">Kinase</keyword>
<keyword id="KW-0479">Metal-binding</keyword>
<keyword id="KW-0547">Nucleotide-binding</keyword>
<keyword id="KW-0630">Potassium</keyword>
<keyword id="KW-0808">Transferase</keyword>
<protein>
    <recommendedName>
        <fullName evidence="1">Type III pantothenate kinase</fullName>
        <ecNumber evidence="1">2.7.1.33</ecNumber>
    </recommendedName>
    <alternativeName>
        <fullName evidence="1">PanK-III</fullName>
    </alternativeName>
    <alternativeName>
        <fullName evidence="1">Pantothenic acid kinase</fullName>
    </alternativeName>
</protein>
<comment type="function">
    <text evidence="1">Catalyzes the phosphorylation of pantothenate (Pan), the first step in CoA biosynthesis.</text>
</comment>
<comment type="catalytic activity">
    <reaction evidence="1">
        <text>(R)-pantothenate + ATP = (R)-4'-phosphopantothenate + ADP + H(+)</text>
        <dbReference type="Rhea" id="RHEA:16373"/>
        <dbReference type="ChEBI" id="CHEBI:10986"/>
        <dbReference type="ChEBI" id="CHEBI:15378"/>
        <dbReference type="ChEBI" id="CHEBI:29032"/>
        <dbReference type="ChEBI" id="CHEBI:30616"/>
        <dbReference type="ChEBI" id="CHEBI:456216"/>
        <dbReference type="EC" id="2.7.1.33"/>
    </reaction>
</comment>
<comment type="cofactor">
    <cofactor evidence="1">
        <name>NH4(+)</name>
        <dbReference type="ChEBI" id="CHEBI:28938"/>
    </cofactor>
    <cofactor evidence="1">
        <name>K(+)</name>
        <dbReference type="ChEBI" id="CHEBI:29103"/>
    </cofactor>
    <text evidence="1">A monovalent cation. Ammonium or potassium.</text>
</comment>
<comment type="pathway">
    <text evidence="1">Cofactor biosynthesis; coenzyme A biosynthesis; CoA from (R)-pantothenate: step 1/5.</text>
</comment>
<comment type="subunit">
    <text evidence="1">Homodimer.</text>
</comment>
<comment type="subcellular location">
    <subcellularLocation>
        <location evidence="1">Cytoplasm</location>
    </subcellularLocation>
</comment>
<comment type="similarity">
    <text evidence="1">Belongs to the type III pantothenate kinase family.</text>
</comment>